<reference key="1">
    <citation type="journal article" date="2009" name="PLoS Biol.">
        <title>Lineage-specific biology revealed by a finished genome assembly of the mouse.</title>
        <authorList>
            <person name="Church D.M."/>
            <person name="Goodstadt L."/>
            <person name="Hillier L.W."/>
            <person name="Zody M.C."/>
            <person name="Goldstein S."/>
            <person name="She X."/>
            <person name="Bult C.J."/>
            <person name="Agarwala R."/>
            <person name="Cherry J.L."/>
            <person name="DiCuccio M."/>
            <person name="Hlavina W."/>
            <person name="Kapustin Y."/>
            <person name="Meric P."/>
            <person name="Maglott D."/>
            <person name="Birtle Z."/>
            <person name="Marques A.C."/>
            <person name="Graves T."/>
            <person name="Zhou S."/>
            <person name="Teague B."/>
            <person name="Potamousis K."/>
            <person name="Churas C."/>
            <person name="Place M."/>
            <person name="Herschleb J."/>
            <person name="Runnheim R."/>
            <person name="Forrest D."/>
            <person name="Amos-Landgraf J."/>
            <person name="Schwartz D.C."/>
            <person name="Cheng Z."/>
            <person name="Lindblad-Toh K."/>
            <person name="Eichler E.E."/>
            <person name="Ponting C.P."/>
        </authorList>
    </citation>
    <scope>NUCLEOTIDE SEQUENCE [LARGE SCALE GENOMIC DNA]</scope>
    <source>
        <strain>C57BL/6J</strain>
    </source>
</reference>
<reference key="2">
    <citation type="submission" date="2005-07" db="EMBL/GenBank/DDBJ databases">
        <authorList>
            <person name="Mural R.J."/>
            <person name="Adams M.D."/>
            <person name="Myers E.W."/>
            <person name="Smith H.O."/>
            <person name="Venter J.C."/>
        </authorList>
    </citation>
    <scope>NUCLEOTIDE SEQUENCE [LARGE SCALE GENOMIC DNA]</scope>
</reference>
<reference key="3">
    <citation type="journal article" date="2002" name="Chromosoma">
        <title>The evolutionarily conserved single-copy gene for murine Tpr encodes one prevalent isoform in somatic cells and lacks paralogs in higher eukaryotes.</title>
        <authorList>
            <person name="Kuznetsov N.V."/>
            <person name="Sandblad L."/>
            <person name="Hase M.E."/>
            <person name="Hunziker A."/>
            <person name="Hergt M."/>
            <person name="Cordes V.C."/>
        </authorList>
    </citation>
    <scope>NUCLEOTIDE SEQUENCE [GENOMIC DNA] OF 75-1274</scope>
    <scope>SUBCELLULAR LOCATION</scope>
    <scope>ALTERNATIVE SPLICING</scope>
    <scope>TISSUE SPECIFICITY</scope>
    <scope>DEVELOPMENTAL STAGE</scope>
    <source>
        <strain>129/Ola</strain>
    </source>
</reference>
<reference key="4">
    <citation type="journal article" date="2002" name="J. Interferon Cytokine Res.">
        <title>The mouse interferon-inducible gene Ifi204 product interacts with the Tpr protein, a component of the nuclear pore complex.</title>
        <authorList>
            <person name="De Andrea M."/>
            <person name="Zannetti C."/>
            <person name="Noris E."/>
            <person name="Gariglio M."/>
            <person name="Azzimonti B."/>
            <person name="Landolfo S."/>
        </authorList>
    </citation>
    <scope>NUCLEOTIDE SEQUENCE [MRNA] OF 1229-2431</scope>
    <scope>INTERACTION WITH IFI203 AND IFI204</scope>
    <scope>SUBCELLULAR LOCATION</scope>
    <source>
        <tissue>Fibroblast</tissue>
    </source>
</reference>
<reference key="5">
    <citation type="journal article" date="2007" name="Proc. Natl. Acad. Sci. U.S.A.">
        <title>Large-scale phosphorylation analysis of mouse liver.</title>
        <authorList>
            <person name="Villen J."/>
            <person name="Beausoleil S.A."/>
            <person name="Gerber S.A."/>
            <person name="Gygi S.P."/>
        </authorList>
    </citation>
    <scope>PHOSPHORYLATION [LARGE SCALE ANALYSIS] AT SER-2223</scope>
    <scope>IDENTIFICATION BY MASS SPECTROMETRY [LARGE SCALE ANALYSIS]</scope>
    <source>
        <tissue>Liver</tissue>
    </source>
</reference>
<reference key="6">
    <citation type="journal article" date="2007" name="Science">
        <title>ATM and ATR substrate analysis reveals extensive protein networks responsive to DNA damage.</title>
        <authorList>
            <person name="Matsuoka S."/>
            <person name="Ballif B.A."/>
            <person name="Smogorzewska A."/>
            <person name="McDonald E.R. III"/>
            <person name="Hurov K.E."/>
            <person name="Luo J."/>
            <person name="Bakalarski C.E."/>
            <person name="Zhao Z."/>
            <person name="Solimini N."/>
            <person name="Lerenthal Y."/>
            <person name="Shiloh Y."/>
            <person name="Gygi S.P."/>
            <person name="Elledge S.J."/>
        </authorList>
    </citation>
    <scope>IDENTIFICATION BY MASS SPECTROMETRY [LARGE SCALE ANALYSIS]</scope>
    <source>
        <tissue>Embryonic fibroblast</tissue>
    </source>
</reference>
<reference key="7">
    <citation type="journal article" date="2009" name="Immunity">
        <title>The phagosomal proteome in interferon-gamma-activated macrophages.</title>
        <authorList>
            <person name="Trost M."/>
            <person name="English L."/>
            <person name="Lemieux S."/>
            <person name="Courcelles M."/>
            <person name="Desjardins M."/>
            <person name="Thibault P."/>
        </authorList>
    </citation>
    <scope>PHOSPHORYLATION [LARGE SCALE ANALYSIS] AT SER-1259 AND SER-2223</scope>
    <scope>IDENTIFICATION BY MASS SPECTROMETRY [LARGE SCALE ANALYSIS]</scope>
</reference>
<reference key="8">
    <citation type="journal article" date="2009" name="Mol. Cell. Proteomics">
        <title>Large scale localization of protein phosphorylation by use of electron capture dissociation mass spectrometry.</title>
        <authorList>
            <person name="Sweet S.M."/>
            <person name="Bailey C.M."/>
            <person name="Cunningham D.L."/>
            <person name="Heath J.K."/>
            <person name="Cooper H.J."/>
        </authorList>
    </citation>
    <scope>PHOSPHORYLATION [LARGE SCALE ANALYSIS] AT SER-2223</scope>
    <scope>IDENTIFICATION BY MASS SPECTROMETRY [LARGE SCALE ANALYSIS]</scope>
    <source>
        <tissue>Embryonic fibroblast</tissue>
    </source>
</reference>
<reference key="9">
    <citation type="journal article" date="2010" name="Cell">
        <title>A tissue-specific atlas of mouse protein phosphorylation and expression.</title>
        <authorList>
            <person name="Huttlin E.L."/>
            <person name="Jedrychowski M.P."/>
            <person name="Elias J.E."/>
            <person name="Goswami T."/>
            <person name="Rad R."/>
            <person name="Beausoleil S.A."/>
            <person name="Villen J."/>
            <person name="Haas W."/>
            <person name="Sowa M.E."/>
            <person name="Gygi S.P."/>
        </authorList>
    </citation>
    <scope>PHOSPHORYLATION [LARGE SCALE ANALYSIS] AT SER-1259; SER-2141; THR-2184 AND SER-2223</scope>
    <scope>IDENTIFICATION BY MASS SPECTROMETRY [LARGE SCALE ANALYSIS]</scope>
    <source>
        <tissue>Brain</tissue>
        <tissue>Brown adipose tissue</tissue>
        <tissue>Heart</tissue>
        <tissue>Kidney</tissue>
        <tissue>Liver</tissue>
        <tissue>Lung</tissue>
        <tissue>Pancreas</tissue>
        <tissue>Spleen</tissue>
        <tissue>Testis</tissue>
    </source>
</reference>
<reference key="10">
    <citation type="journal article" date="2013" name="Mol. Cell">
        <title>SIRT5-mediated lysine desuccinylation impacts diverse metabolic pathways.</title>
        <authorList>
            <person name="Park J."/>
            <person name="Chen Y."/>
            <person name="Tishkoff D.X."/>
            <person name="Peng C."/>
            <person name="Tan M."/>
            <person name="Dai L."/>
            <person name="Xie Z."/>
            <person name="Zhang Y."/>
            <person name="Zwaans B.M."/>
            <person name="Skinner M.E."/>
            <person name="Lombard D.B."/>
            <person name="Zhao Y."/>
        </authorList>
    </citation>
    <scope>ACETYLATION [LARGE SCALE ANALYSIS] AT LYS-551; LYS-787; LYS-822; LYS-829 AND LYS-1760</scope>
    <scope>IDENTIFICATION BY MASS SPECTROMETRY [LARGE SCALE ANALYSIS]</scope>
    <source>
        <tissue>Embryonic fibroblast</tissue>
    </source>
</reference>
<reference key="11">
    <citation type="journal article" date="2014" name="Mol. Cell. Proteomics">
        <title>Immunoaffinity enrichment and mass spectrometry analysis of protein methylation.</title>
        <authorList>
            <person name="Guo A."/>
            <person name="Gu H."/>
            <person name="Zhou J."/>
            <person name="Mulhern D."/>
            <person name="Wang Y."/>
            <person name="Lee K.A."/>
            <person name="Yang V."/>
            <person name="Aguiar M."/>
            <person name="Kornhauser J."/>
            <person name="Jia X."/>
            <person name="Ren J."/>
            <person name="Beausoleil S.A."/>
            <person name="Silva J.C."/>
            <person name="Vemulapalli V."/>
            <person name="Bedford M.T."/>
            <person name="Comb M.J."/>
        </authorList>
    </citation>
    <scope>METHYLATION [LARGE SCALE ANALYSIS] AT ARG-2174; ARG-2179; ARG-2231; ARG-2411; ARG-2413 AND ARG-2422</scope>
    <scope>IDENTIFICATION BY MASS SPECTROMETRY [LARGE SCALE ANALYSIS]</scope>
    <source>
        <tissue>Brain</tissue>
        <tissue>Embryo</tissue>
    </source>
</reference>
<feature type="chain" id="PRO_0000422100" description="Nucleoprotein TPR">
    <location>
        <begin position="1"/>
        <end position="2431"/>
    </location>
</feature>
<feature type="region of interest" description="Disordered" evidence="4">
    <location>
        <begin position="1"/>
        <end position="48"/>
    </location>
</feature>
<feature type="region of interest" description="Sufficient for interaction with TPR" evidence="1">
    <location>
        <begin position="77"/>
        <end position="87"/>
    </location>
</feature>
<feature type="region of interest" description="Necessary for interaction with HSF1" evidence="1">
    <location>
        <begin position="88"/>
        <end position="191"/>
    </location>
</feature>
<feature type="region of interest" description="Necessary for association to the NPC" evidence="1">
    <location>
        <begin position="511"/>
        <end position="587"/>
    </location>
</feature>
<feature type="region of interest" description="Disordered" evidence="4">
    <location>
        <begin position="989"/>
        <end position="1011"/>
    </location>
</feature>
<feature type="region of interest" description="Necessary for interaction with HSF1" evidence="1">
    <location>
        <begin position="1292"/>
        <end position="1394"/>
    </location>
</feature>
<feature type="region of interest" description="Disordered" evidence="4">
    <location>
        <begin position="1689"/>
        <end position="1744"/>
    </location>
</feature>
<feature type="region of interest" description="Disordered" evidence="4">
    <location>
        <begin position="1873"/>
        <end position="2193"/>
    </location>
</feature>
<feature type="region of interest" description="Sufficient and essential for mediating its nuclear import" evidence="1">
    <location>
        <begin position="1882"/>
        <end position="1937"/>
    </location>
</feature>
<feature type="region of interest" description="Disordered" evidence="4">
    <location>
        <begin position="2295"/>
        <end position="2431"/>
    </location>
</feature>
<feature type="coiled-coil region" evidence="3">
    <location>
        <begin position="98"/>
        <end position="444"/>
    </location>
</feature>
<feature type="coiled-coil region" evidence="3">
    <location>
        <begin position="486"/>
        <end position="678"/>
    </location>
</feature>
<feature type="coiled-coil region" evidence="3">
    <location>
        <begin position="736"/>
        <end position="1246"/>
    </location>
</feature>
<feature type="coiled-coil region" evidence="3">
    <location>
        <begin position="1289"/>
        <end position="1494"/>
    </location>
</feature>
<feature type="coiled-coil region" evidence="3">
    <location>
        <begin position="1547"/>
        <end position="1700"/>
    </location>
</feature>
<feature type="compositionally biased region" description="Polar residues" evidence="4">
    <location>
        <begin position="989"/>
        <end position="998"/>
    </location>
</feature>
<feature type="compositionally biased region" description="Basic and acidic residues" evidence="4">
    <location>
        <begin position="1002"/>
        <end position="1011"/>
    </location>
</feature>
<feature type="compositionally biased region" description="Basic and acidic residues" evidence="4">
    <location>
        <begin position="1689"/>
        <end position="1701"/>
    </location>
</feature>
<feature type="compositionally biased region" description="Polar residues" evidence="4">
    <location>
        <begin position="1703"/>
        <end position="1722"/>
    </location>
</feature>
<feature type="compositionally biased region" description="Polar residues" evidence="4">
    <location>
        <begin position="1873"/>
        <end position="1898"/>
    </location>
</feature>
<feature type="compositionally biased region" description="Acidic residues" evidence="4">
    <location>
        <begin position="1937"/>
        <end position="1951"/>
    </location>
</feature>
<feature type="compositionally biased region" description="Polar residues" evidence="4">
    <location>
        <begin position="1954"/>
        <end position="1963"/>
    </location>
</feature>
<feature type="compositionally biased region" description="Low complexity" evidence="4">
    <location>
        <begin position="1994"/>
        <end position="2005"/>
    </location>
</feature>
<feature type="compositionally biased region" description="Acidic residues" evidence="4">
    <location>
        <begin position="2016"/>
        <end position="2057"/>
    </location>
</feature>
<feature type="compositionally biased region" description="Acidic residues" evidence="4">
    <location>
        <begin position="2067"/>
        <end position="2088"/>
    </location>
</feature>
<feature type="compositionally biased region" description="Polar residues" evidence="4">
    <location>
        <begin position="2100"/>
        <end position="2132"/>
    </location>
</feature>
<feature type="compositionally biased region" description="Polar residues" evidence="4">
    <location>
        <begin position="2295"/>
        <end position="2312"/>
    </location>
</feature>
<feature type="compositionally biased region" description="Low complexity" evidence="4">
    <location>
        <begin position="2313"/>
        <end position="2325"/>
    </location>
</feature>
<feature type="compositionally biased region" description="Acidic residues" evidence="4">
    <location>
        <begin position="2327"/>
        <end position="2340"/>
    </location>
</feature>
<feature type="compositionally biased region" description="Low complexity" evidence="4">
    <location>
        <begin position="2341"/>
        <end position="2351"/>
    </location>
</feature>
<feature type="compositionally biased region" description="Acidic residues" evidence="4">
    <location>
        <begin position="2353"/>
        <end position="2367"/>
    </location>
</feature>
<feature type="compositionally biased region" description="Low complexity" evidence="4">
    <location>
        <begin position="2368"/>
        <end position="2388"/>
    </location>
</feature>
<feature type="compositionally biased region" description="Gly residues" evidence="4">
    <location>
        <begin position="2420"/>
        <end position="2431"/>
    </location>
</feature>
<feature type="modified residue" description="N6-acetyllysine" evidence="2">
    <location>
        <position position="326"/>
    </location>
</feature>
<feature type="modified residue" description="N6-acetyllysine" evidence="2">
    <location>
        <position position="386"/>
    </location>
</feature>
<feature type="modified residue" description="N6-acetyllysine" evidence="2">
    <location>
        <position position="419"/>
    </location>
</feature>
<feature type="modified residue" description="Phosphoserine" evidence="2">
    <location>
        <position position="453"/>
    </location>
</feature>
<feature type="modified residue" description="N6-acetyllysine" evidence="2">
    <location>
        <position position="502"/>
    </location>
</feature>
<feature type="modified residue" description="N6-acetyllysine" evidence="2">
    <location>
        <position position="531"/>
    </location>
</feature>
<feature type="modified residue" description="N6-acetyllysine" evidence="13">
    <location>
        <position position="551"/>
    </location>
</feature>
<feature type="modified residue" description="Phosphoserine" evidence="2">
    <location>
        <position position="596"/>
    </location>
</feature>
<feature type="modified residue" description="Phosphoserine" evidence="2">
    <location>
        <position position="597"/>
    </location>
</feature>
<feature type="modified residue" description="Phosphoserine" evidence="2">
    <location>
        <position position="706"/>
    </location>
</feature>
<feature type="modified residue" description="N6-acetyllysine" evidence="13">
    <location>
        <position position="787"/>
    </location>
</feature>
<feature type="modified residue" description="N6-acetyllysine" evidence="2">
    <location>
        <position position="797"/>
    </location>
</feature>
<feature type="modified residue" description="N6-acetyllysine" evidence="13">
    <location>
        <position position="822"/>
    </location>
</feature>
<feature type="modified residue" description="N6-acetyllysine" evidence="13">
    <location>
        <position position="829"/>
    </location>
</feature>
<feature type="modified residue" description="Phosphoserine" evidence="11 12">
    <location>
        <position position="1259"/>
    </location>
</feature>
<feature type="modified residue" description="N6-acetyllysine" evidence="13">
    <location>
        <position position="1760"/>
    </location>
</feature>
<feature type="modified residue" description="Phosphothreonine" evidence="2">
    <location>
        <position position="1762"/>
    </location>
</feature>
<feature type="modified residue" description="Phosphoserine" evidence="2">
    <location>
        <position position="1963"/>
    </location>
</feature>
<feature type="modified residue" description="Phosphoserine" evidence="2">
    <location>
        <position position="2102"/>
    </location>
</feature>
<feature type="modified residue" description="Phosphoserine" evidence="2">
    <location>
        <position position="2105"/>
    </location>
</feature>
<feature type="modified residue" description="Phosphoserine" evidence="2">
    <location>
        <position position="2116"/>
    </location>
</feature>
<feature type="modified residue" description="Phosphoserine" evidence="2">
    <location>
        <position position="2118"/>
    </location>
</feature>
<feature type="modified residue" description="Phosphoserine" evidence="12">
    <location>
        <position position="2141"/>
    </location>
</feature>
<feature type="modified residue" description="Omega-N-methylarginine" evidence="14">
    <location>
        <position position="2174"/>
    </location>
</feature>
<feature type="modified residue" description="Omega-N-methylarginine" evidence="14">
    <location>
        <position position="2179"/>
    </location>
</feature>
<feature type="modified residue" description="Phosphothreonine" evidence="12">
    <location>
        <position position="2184"/>
    </location>
</feature>
<feature type="modified residue" description="Phosphothreonine" evidence="2">
    <location>
        <position position="2205"/>
    </location>
</feature>
<feature type="modified residue" description="Phosphoserine" evidence="9 10 11 12">
    <location>
        <position position="2223"/>
    </location>
</feature>
<feature type="modified residue" description="Omega-N-methylarginine" evidence="14">
    <location>
        <position position="2231"/>
    </location>
</feature>
<feature type="modified residue" description="Asymmetric dimethylarginine" evidence="14">
    <location>
        <position position="2411"/>
    </location>
</feature>
<feature type="modified residue" description="Asymmetric dimethylarginine" evidence="14">
    <location>
        <position position="2413"/>
    </location>
</feature>
<feature type="modified residue" description="Asymmetric dimethylarginine" evidence="14">
    <location>
        <position position="2422"/>
    </location>
</feature>
<gene>
    <name evidence="8" type="primary">Tpr</name>
</gene>
<evidence type="ECO:0000250" key="1"/>
<evidence type="ECO:0000250" key="2">
    <source>
        <dbReference type="UniProtKB" id="P12270"/>
    </source>
</evidence>
<evidence type="ECO:0000255" key="3"/>
<evidence type="ECO:0000256" key="4">
    <source>
        <dbReference type="SAM" id="MobiDB-lite"/>
    </source>
</evidence>
<evidence type="ECO:0000269" key="5">
    <source>
    </source>
</evidence>
<evidence type="ECO:0000269" key="6">
    <source>
    </source>
</evidence>
<evidence type="ECO:0000305" key="7"/>
<evidence type="ECO:0000312" key="8">
    <source>
        <dbReference type="MGI" id="MGI:1922066"/>
    </source>
</evidence>
<evidence type="ECO:0007744" key="9">
    <source>
    </source>
</evidence>
<evidence type="ECO:0007744" key="10">
    <source>
    </source>
</evidence>
<evidence type="ECO:0007744" key="11">
    <source>
    </source>
</evidence>
<evidence type="ECO:0007744" key="12">
    <source>
    </source>
</evidence>
<evidence type="ECO:0007744" key="13">
    <source>
    </source>
</evidence>
<evidence type="ECO:0007744" key="14">
    <source>
    </source>
</evidence>
<sequence length="2431" mass="273990">MTSGGSASRSGHRGVPMTSRGFDGSRRGSLRRAGARETASEAADGAAPAAGLRASPCSLASPSAAAAVAAIPADMAAVLQQVLERPELNKLPKSTQNKLEKFLAEQQSEIDCLKGRHEKFKVESEQQYFEIEKRLSQSQERLVTETRECQNLRLELEKLNNQVKVLTEKTKELETAQDRNLGIQSQFTRAKEELEAEKRDLIRTNERLSQEVEYLTEDVKRLNEKLKESNTTKGELQLKLDELQASDVAVKYREKRLEQEKELLHNQNSWLNTELKTKTDELLALGREKGNEILELKCNLENKKEEVLRLEEQMNGLKTSNEHLQKHVEDLLTKLKEAKEQQASMEEKFHNELNAHIKLSNLYKSAADDSEAKSNELTRAVDELHKLLKEAGEANKTIQDHLLQVEESKDQMEKEMLEKIGKLEKELENANDLLSATKRKGAILSEEELAAMSPTAAAVAKIVKPGMKLTELYNAYVETQDQLLLEKQENKRINKYLDEIVKEVEAKAPILKRQREEYERAQKAVASLSAKLEQAMKEIQRLQEDTDKANKHSSVLERDNQRMEIQIKDLSQQIRVLLMELEEARGNHVIRDEEVSSADISSSSEVISQHLVSYRNIEELQQQNQRLLFALRELGETREREEQETTSSKIAELQHKLENSLAELEQLRESRQHQMQLVDSIVRQRDMYRILLSQTTGMAIPLQASSLDDISLLSTPKRSSTSQTVSTPAPEPVIDSTEAIEAKAALKQLQEIFENYKKEKIDSEKLQNEQLEKLQEQVTDLRSQNTKISTQLDFASKRYEMLQDNVEGYRREITSLQERNQKLTATTQKQEQIINTMTQDLRGANEKLAVAEVRAENLKKEKEMLKLSEVRLSQQRESLLAEQRGQNLLLTNLQTIQGILERSETETKQRLNSQIEKLEHEISHLKKKLENEVEQRHTLTRNLDVQLLDTKRQLDTEINLHLNTKELLKNAQKDIATLKQHLNNMEAQLASQSTQRTGKGQPGDRDDVDDLKSQLRQAEEQVNDLKERLKTSTSNVEQYRAMVTSLEDSLNKEKQVTEEVHKNIEVRLKESAEFQTQLEKKLMEVEKEKQELQDDKRKAIESMEQQLSELKKTLSTVQNEVQEALQRASTALSNEQQARRDCQEQAKIAVEAQNKYERELMLHAADVEALQAAKEQVSKMTSIRQHLEETTQKAESQLLECKASWEERERVLKDEVSKSVSRCEDLEKQNRLLHDQIEKLSDKVVTSMKDAVQAPLNVSLNEEGKSQEQILEILRFIRREKEIAETRFEVAQVESLRYRQRVELLERELQELQDSLNVEREKVQVTAKTMAQHEELMKKTETMNVVMETNKMLREEKERLEQNLQQMQAKVRKLELDILPLQEANAELSEKSGMLQAEKKLLEEDVKRWKARNQQLINQQKDPDTEEYRKLLSEKEIHTKRIQQLNEEVGRLKAEIARSNASLTNNQNLIQSLREDLSKARTEKEGIQKDLDAKIIDIQEKVKTITQVKKIGRRYKTQFEELKAQQNKAMETSTQSSGDHQEQHISVQEMQELKDTLSQSETKTKSLEGQVENLQKTLSEKETEARSLQEQTVQLQSELSRLRQDLQDKTTEEQLRQQMNEKTWKTLALAKSKITHLSGVKDQLTKEIEELKQRNGALDQQKDELDVRMTALKSQYEGRISRLERELREHQERHLEQRDEPQEPTNKAPEQQRQITLKTTPASGERGIASTSDPPTANIKPTPVVSTPSKVTAAAMAGNKSTPRASIRPMVTPATVTNPTTTPTATVMPTTQVESQEAMQSEGPVEHVPVFGNASGSVRSTSPNVQPSISQPILTVQQQTQATAFVQPTQQSHPQIEPTNQELSPNIVEVVQSSPVERPSTSTAVFGTVSATPSSSLPKRTREEEEDSTMEAGDQVSEDTVEMPLPKKLKMVTPVGTEEEVMAEESTDGEAETQAYNQDSQDSIGEGVTQGDYTPMEDSEETSQSLQIDLGPLQSDQQTTSSQDGQGKGDDVIVIDSDDEDDDEENDGEHEDYEEDEDDDDDEEDDTGMGDEGEDSNEGTGSADGNDGYEADDAEGGDGTDPGTETEESMGGAESHQRAADSQNSGEGNTSAAESSFSQEVAREQQPTSASERQTPQAPQSPRRPPHPLPPRLTIHAPPQELGPPVQRIQMTRRQSVGRGLQLTPGIGGMQQHFFDDEDRTVPSTPTLVVPHRTDGFAEAIHSPQVAGVPRFRFGPPEDMPQTSSSHSDLGQLASQGGLGMYETPLFLAHEEESGGRSVPTTPLQVAAPVTVFTESTTSDASEHASQSVPMVTTSTGTLSTTNETAAGDDGDEVFVEAESEGISSEAGLEIDSQQEEEPVQASDESDLPSTSQDPPSSSSVDTSSSQPKPFRRVRLQTTLRQGVRGRQFNRQRGISHAMGGRGGINRGNIN</sequence>
<comment type="function">
    <text evidence="1">Component of the nuclear pore complex (NPC), a complex required for the trafficking across the nuclear envelope. Functions as a scaffolding element in the nuclear phase of the NPC essential for normal nucleocytoplasmic transport of proteins and mRNAs, plays a role in the establishment of nuclear-peripheral chromatin compartmentalization in interphase, and in the mitotic spindle checkpoint signaling during mitosis. Involved in the quality control and retention of unspliced mRNAs in the nucleus; in association with NUP153, regulates the nuclear export of unspliced mRNA species bearing constitutive transport element (CTE) in a NXF1- and KHDRBS1-independent manner. Negatively regulates both the association of CTE-containing mRNA with large polyribosomes and translation initiation. Does not play any role in Rev response element (RRE)-mediated export of unspliced mRNAs. Implicated in nuclear export of mRNAs transcribed from heat shock gene promoters; associates both with chromatin in the HSP70 promoter and with mRNAs transcribed from this promoter under stress-induced conditions. Plays a limited role in the regulation of nuclear protein export. Modulates the nucleocytoplasmic transport of activated MAPK1/ERK2 and huntingtin/HTT and may serve as a docking site for the XPO1/CRM1-mediated nuclear export complex. Also plays a role as a structural and functional element of the perinuclear chromatin distribution; involved in the formation and/or maintenance of NPC-associated perinuclear heterochromatin exclusion zones (HEZs). Finally, acts as a spatial regulator of the spindle-assembly checkpoint (SAC) response ensuring a timely and effective recruitment of spindle checkpoint proteins like MAD1L1 and MAD2L1 to unattached kinetochore during the metaphase-anaphase transition before chromosome congression. Its N-terminus is involved in activation of oncogenic kinases (By similarity).</text>
</comment>
<comment type="subunit">
    <text evidence="1 2 6">Homodimer. Part of the nuclear pore complex (NPC). Associates with the XPO1/CRM1-mediated nuclear export complex, the Importin alpha/Importin beta receptor and the dynein 1 complex. Interacts (via C-terminal domain) with the KPNB1; the interaction occurs in a RanGTP-dependent manner. Interacts (via C-terminal region and phosphorylated form) with MAPK1/ERK2 (via phosphorylated form); the interaction requires dimerization of MAPK1/ERK2 and increases following EGF stimulation. Interacts with MAPK3/ERK1; the interaction increases following EGF stimulation. Interacts (via coiled coil region) with NUP153; the interaction is direct. Interacts with HSF1; the interaction increases in a stress-responsive manner and stimulates export of stress-induced HSP70 mRNA. Interacts with huntingtin/HTT; the interaction is inhibited by aggregated huntingtin/HTT forms with expanded polyglutamine stretch. Interacts with MAD1L1 (via N-terminal region), MAD2L1, and TTK; the interactions occurs in a microtubule-independent manner. Interacts (via middle region) with DYNLL1. Interacts with DCTN1, dynein, NUP153 and tubulin. Interacts with MTA1 (By similarity). Interacts with IFI204 (via C-terminal region). Interacts with IFI203. Interacts with ZC3HC1; this interaction mediates ZC3HC1 nuclear envelopes (NE)-association but also required for proper positioning of a substantial amount of TPR at the nuclear basket (NB) (By similarity).</text>
</comment>
<comment type="subcellular location">
    <subcellularLocation>
        <location evidence="2">Nucleus</location>
    </subcellularLocation>
    <subcellularLocation>
        <location evidence="2">Nucleus membrane</location>
        <topology evidence="2">Peripheral membrane protein</topology>
        <orientation evidence="2">Nucleoplasmic side</orientation>
    </subcellularLocation>
    <subcellularLocation>
        <location evidence="5 6">Nucleus envelope</location>
    </subcellularLocation>
    <subcellularLocation>
        <location evidence="2 6">Nucleus</location>
        <location evidence="2 6">Nuclear pore complex</location>
    </subcellularLocation>
    <subcellularLocation>
        <location evidence="2">Cytoplasm</location>
    </subcellularLocation>
    <subcellularLocation>
        <location evidence="2">Cytoplasm</location>
        <location evidence="2">Cytoskeleton</location>
        <location evidence="2">Spindle</location>
    </subcellularLocation>
    <subcellularLocation>
        <location evidence="2">Chromosome</location>
        <location evidence="2">Centromere</location>
        <location evidence="2">Kinetochore</location>
    </subcellularLocation>
    <subcellularLocation>
        <location evidence="2">Nucleus membrane</location>
        <topology evidence="2">Peripheral membrane protein</topology>
        <orientation evidence="2">Cytoplasmic side</orientation>
    </subcellularLocation>
    <text evidence="1 2">Detected as discrete intranuclear foci with IFI204 (By similarity). In interphase, localizes to the nucleoplasmic side of the nuclear pore complex (NPC) core structure, forming a fibrous structure called the nuclear basket. Detected exclusively to the cytoplasmic margin of NPC (By similarity). Docking to the inner nucleoplasmic side of the NPC is mediated through binding to nucleoporins. Anchored by NUP153 to the NPC. The assembly of the NPC is a stepwise process in which Trp-containing peripheral structures assemble after other components, including p62. Detected as filaments that emanate from the nuclear basket of the NPC and extend to the nucleolus to delineate a chromatin-free network extending from the nuclear envelope to the perinucleolar region. Detected in diffuse and discrete spheroidal intranuclear foci. Nucleocytoplasmic shuttling protein imported into the nucleus in a XPO1/CRM1- and Importin alpha/Importin beta receptor-dependent manner. Remains localized to the nuclear membrane after poliovirus (PV) infection. During mitosis, remains associated with the nuclear envelope until prometaphase. Associated with the mitotic spindle from late prometaphase until anaphase. Reorganized during mitosis in a viscous and dynamic nuclear-derived spindle matrix that embeds the microtubule spindle apparatus from pole to pole in a microtubule-independent manner. Recruited to the reforming nuclear envelope during telophase and cytokinesis. Detected at kinetochores during prometaphase. Colocalizes with MAD2L1 in the spindle matrix but not at kinetochore. Colocalizes with dynein, dynactin, tubulin at kinetochore during the metaphase-anaphase transition. Colocalizes with DYNLL1 at the mitotic spindle (By similarity).</text>
</comment>
<comment type="tissue specificity">
    <text evidence="5">Expressed in the heart, liver, kidney, spleen, lung and skeletal muscles.</text>
</comment>
<comment type="developmental stage">
    <text evidence="5">Expressed both maternally and zygotically. Expressed at the mid two-cell stage and in the embryo at 7, 11, 15 and 17 dpc.</text>
</comment>
<comment type="domain">
    <text evidence="1">The N-terminal domain mediates intranuclear attachment to the nuclear pore complex. The C-terminal domain mediates its nuclear import (By similarity).</text>
</comment>
<comment type="PTM">
    <text evidence="1">Phosphorylated. Phosphorylation occurs on serine and threonine residues (comprised in the C-terminal region) by MAPK1/ERK2 and stabilizes the interaction between these two proteins (By similarity).</text>
</comment>
<comment type="similarity">
    <text evidence="7">Belongs to the TPR family.</text>
</comment>
<organism>
    <name type="scientific">Mus musculus</name>
    <name type="common">Mouse</name>
    <dbReference type="NCBI Taxonomy" id="10090"/>
    <lineage>
        <taxon>Eukaryota</taxon>
        <taxon>Metazoa</taxon>
        <taxon>Chordata</taxon>
        <taxon>Craniata</taxon>
        <taxon>Vertebrata</taxon>
        <taxon>Euteleostomi</taxon>
        <taxon>Mammalia</taxon>
        <taxon>Eutheria</taxon>
        <taxon>Euarchontoglires</taxon>
        <taxon>Glires</taxon>
        <taxon>Rodentia</taxon>
        <taxon>Myomorpha</taxon>
        <taxon>Muroidea</taxon>
        <taxon>Muridae</taxon>
        <taxon>Murinae</taxon>
        <taxon>Mus</taxon>
        <taxon>Mus</taxon>
    </lineage>
</organism>
<keyword id="KW-0007">Acetylation</keyword>
<keyword id="KW-0131">Cell cycle</keyword>
<keyword id="KW-0132">Cell division</keyword>
<keyword id="KW-0137">Centromere</keyword>
<keyword id="KW-0158">Chromosome</keyword>
<keyword id="KW-0175">Coiled coil</keyword>
<keyword id="KW-0963">Cytoplasm</keyword>
<keyword id="KW-0206">Cytoskeleton</keyword>
<keyword id="KW-0995">Kinetochore</keyword>
<keyword id="KW-0472">Membrane</keyword>
<keyword id="KW-0488">Methylation</keyword>
<keyword id="KW-0498">Mitosis</keyword>
<keyword id="KW-0509">mRNA transport</keyword>
<keyword id="KW-0906">Nuclear pore complex</keyword>
<keyword id="KW-0539">Nucleus</keyword>
<keyword id="KW-0597">Phosphoprotein</keyword>
<keyword id="KW-0653">Protein transport</keyword>
<keyword id="KW-0656">Proto-oncogene</keyword>
<keyword id="KW-1185">Reference proteome</keyword>
<keyword id="KW-0811">Translocation</keyword>
<keyword id="KW-0813">Transport</keyword>
<dbReference type="EMBL" id="AC161432">
    <property type="status" value="NOT_ANNOTATED_CDS"/>
    <property type="molecule type" value="Genomic_DNA"/>
</dbReference>
<dbReference type="EMBL" id="CH466520">
    <property type="protein sequence ID" value="EDL39478.1"/>
    <property type="molecule type" value="Genomic_DNA"/>
</dbReference>
<dbReference type="EMBL" id="AJ298076">
    <property type="protein sequence ID" value="CAC40701.1"/>
    <property type="molecule type" value="Genomic_DNA"/>
</dbReference>
<dbReference type="EMBL" id="AF490392">
    <property type="protein sequence ID" value="AAM03151.1"/>
    <property type="molecule type" value="mRNA"/>
</dbReference>
<dbReference type="CCDS" id="CCDS35734.2"/>
<dbReference type="RefSeq" id="NP_598541.3">
    <property type="nucleotide sequence ID" value="NM_133780.3"/>
</dbReference>
<dbReference type="SMR" id="F6ZDS4"/>
<dbReference type="BioGRID" id="224509">
    <property type="interactions" value="39"/>
</dbReference>
<dbReference type="ComplexPortal" id="CPX-4474">
    <property type="entry name" value="Nuclear pore complex"/>
</dbReference>
<dbReference type="FunCoup" id="F6ZDS4">
    <property type="interactions" value="4442"/>
</dbReference>
<dbReference type="IntAct" id="F6ZDS4">
    <property type="interactions" value="2"/>
</dbReference>
<dbReference type="STRING" id="10090.ENSMUSP00000117616"/>
<dbReference type="BindingDB" id="F6ZDS4"/>
<dbReference type="ChEMBL" id="CHEMBL2439946"/>
<dbReference type="GlyGen" id="F6ZDS4">
    <property type="glycosylation" value="6 sites, 1 O-linked glycan (3 sites)"/>
</dbReference>
<dbReference type="iPTMnet" id="F6ZDS4"/>
<dbReference type="PhosphoSitePlus" id="F6ZDS4"/>
<dbReference type="SwissPalm" id="F6ZDS4"/>
<dbReference type="jPOST" id="F6ZDS4"/>
<dbReference type="PaxDb" id="10090-ENSMUSP00000117616"/>
<dbReference type="PeptideAtlas" id="F6ZDS4"/>
<dbReference type="ProteomicsDB" id="259073"/>
<dbReference type="Pumba" id="F6ZDS4"/>
<dbReference type="Antibodypedia" id="11198">
    <property type="antibodies" value="222 antibodies from 30 providers"/>
</dbReference>
<dbReference type="DNASU" id="108989"/>
<dbReference type="Ensembl" id="ENSMUST00000124973.9">
    <property type="protein sequence ID" value="ENSMUSP00000117616.3"/>
    <property type="gene ID" value="ENSMUSG00000006005.19"/>
</dbReference>
<dbReference type="GeneID" id="108989"/>
<dbReference type="KEGG" id="mmu:108989"/>
<dbReference type="UCSC" id="uc007cyb.2">
    <property type="organism name" value="mouse"/>
</dbReference>
<dbReference type="AGR" id="MGI:1922066"/>
<dbReference type="CTD" id="7175"/>
<dbReference type="MGI" id="MGI:1922066">
    <property type="gene designation" value="Tpr"/>
</dbReference>
<dbReference type="VEuPathDB" id="HostDB:ENSMUSG00000006005"/>
<dbReference type="eggNOG" id="KOG4674">
    <property type="taxonomic scope" value="Eukaryota"/>
</dbReference>
<dbReference type="GeneTree" id="ENSGT00730000111014"/>
<dbReference type="InParanoid" id="F6ZDS4"/>
<dbReference type="OMA" id="HAQQNYE"/>
<dbReference type="OrthoDB" id="343070at2759"/>
<dbReference type="PhylomeDB" id="F6ZDS4"/>
<dbReference type="TreeFam" id="TF350364"/>
<dbReference type="Reactome" id="R-MMU-159227">
    <property type="pathway name" value="Transport of the SLBP independent Mature mRNA"/>
</dbReference>
<dbReference type="Reactome" id="R-MMU-159230">
    <property type="pathway name" value="Transport of the SLBP Dependant Mature mRNA"/>
</dbReference>
<dbReference type="Reactome" id="R-MMU-159231">
    <property type="pathway name" value="Transport of Mature mRNA Derived from an Intronless Transcript"/>
</dbReference>
<dbReference type="Reactome" id="R-MMU-159236">
    <property type="pathway name" value="Transport of Mature mRNA derived from an Intron-Containing Transcript"/>
</dbReference>
<dbReference type="Reactome" id="R-MMU-170822">
    <property type="pathway name" value="Regulation of Glucokinase by Glucokinase Regulatory Protein"/>
</dbReference>
<dbReference type="Reactome" id="R-MMU-191859">
    <property type="pathway name" value="snRNP Assembly"/>
</dbReference>
<dbReference type="Reactome" id="R-MMU-3108214">
    <property type="pathway name" value="SUMOylation of DNA damage response and repair proteins"/>
</dbReference>
<dbReference type="Reactome" id="R-MMU-3232142">
    <property type="pathway name" value="SUMOylation of ubiquitinylation proteins"/>
</dbReference>
<dbReference type="Reactome" id="R-MMU-3301854">
    <property type="pathway name" value="Nuclear Pore Complex (NPC) Disassembly"/>
</dbReference>
<dbReference type="Reactome" id="R-MMU-3371453">
    <property type="pathway name" value="Regulation of HSF1-mediated heat shock response"/>
</dbReference>
<dbReference type="Reactome" id="R-MMU-4085377">
    <property type="pathway name" value="SUMOylation of SUMOylation proteins"/>
</dbReference>
<dbReference type="Reactome" id="R-MMU-4551638">
    <property type="pathway name" value="SUMOylation of chromatin organization proteins"/>
</dbReference>
<dbReference type="Reactome" id="R-MMU-4570464">
    <property type="pathway name" value="SUMOylation of RNA binding proteins"/>
</dbReference>
<dbReference type="Reactome" id="R-MMU-4615885">
    <property type="pathway name" value="SUMOylation of DNA replication proteins"/>
</dbReference>
<dbReference type="Reactome" id="R-MMU-5578749">
    <property type="pathway name" value="Transcriptional regulation by small RNAs"/>
</dbReference>
<dbReference type="BioGRID-ORCS" id="108989">
    <property type="hits" value="18 hits in 80 CRISPR screens"/>
</dbReference>
<dbReference type="ChiTaRS" id="Tpr">
    <property type="organism name" value="mouse"/>
</dbReference>
<dbReference type="PRO" id="PR:F6ZDS4"/>
<dbReference type="Proteomes" id="UP000000589">
    <property type="component" value="Chromosome 1"/>
</dbReference>
<dbReference type="RNAct" id="F6ZDS4">
    <property type="molecule type" value="protein"/>
</dbReference>
<dbReference type="Bgee" id="ENSMUSG00000006005">
    <property type="expression patterns" value="Expressed in undifferentiated genital tubercle and 271 other cell types or tissues"/>
</dbReference>
<dbReference type="ExpressionAtlas" id="F6ZDS4">
    <property type="expression patterns" value="baseline and differential"/>
</dbReference>
<dbReference type="GO" id="GO:0000775">
    <property type="term" value="C:chromosome, centromeric region"/>
    <property type="evidence" value="ECO:0007669"/>
    <property type="project" value="UniProtKB-KW"/>
</dbReference>
<dbReference type="GO" id="GO:0005737">
    <property type="term" value="C:cytoplasm"/>
    <property type="evidence" value="ECO:0000250"/>
    <property type="project" value="UniProtKB"/>
</dbReference>
<dbReference type="GO" id="GO:0005868">
    <property type="term" value="C:cytoplasmic dynein complex"/>
    <property type="evidence" value="ECO:0000250"/>
    <property type="project" value="UniProtKB"/>
</dbReference>
<dbReference type="GO" id="GO:0072686">
    <property type="term" value="C:mitotic spindle"/>
    <property type="evidence" value="ECO:0000250"/>
    <property type="project" value="UniProtKB"/>
</dbReference>
<dbReference type="GO" id="GO:0005635">
    <property type="term" value="C:nuclear envelope"/>
    <property type="evidence" value="ECO:0000314"/>
    <property type="project" value="UniProtKB"/>
</dbReference>
<dbReference type="GO" id="GO:0042405">
    <property type="term" value="C:nuclear inclusion body"/>
    <property type="evidence" value="ECO:0000314"/>
    <property type="project" value="UniProtKB"/>
</dbReference>
<dbReference type="GO" id="GO:0031965">
    <property type="term" value="C:nuclear membrane"/>
    <property type="evidence" value="ECO:0000250"/>
    <property type="project" value="UniProtKB"/>
</dbReference>
<dbReference type="GO" id="GO:0034399">
    <property type="term" value="C:nuclear periphery"/>
    <property type="evidence" value="ECO:0000314"/>
    <property type="project" value="UniProtKB"/>
</dbReference>
<dbReference type="GO" id="GO:0005643">
    <property type="term" value="C:nuclear pore"/>
    <property type="evidence" value="ECO:0000314"/>
    <property type="project" value="UniProtKB"/>
</dbReference>
<dbReference type="GO" id="GO:0044615">
    <property type="term" value="C:nuclear pore nuclear basket"/>
    <property type="evidence" value="ECO:0000250"/>
    <property type="project" value="UniProtKB"/>
</dbReference>
<dbReference type="GO" id="GO:0003682">
    <property type="term" value="F:chromatin binding"/>
    <property type="evidence" value="ECO:0000250"/>
    <property type="project" value="UniProtKB"/>
</dbReference>
<dbReference type="GO" id="GO:0031072">
    <property type="term" value="F:heat shock protein binding"/>
    <property type="evidence" value="ECO:0000250"/>
    <property type="project" value="UniProtKB"/>
</dbReference>
<dbReference type="GO" id="GO:0051019">
    <property type="term" value="F:mitogen-activated protein kinase binding"/>
    <property type="evidence" value="ECO:0000250"/>
    <property type="project" value="UniProtKB"/>
</dbReference>
<dbReference type="GO" id="GO:0003729">
    <property type="term" value="F:mRNA binding"/>
    <property type="evidence" value="ECO:0000250"/>
    <property type="project" value="UniProtKB"/>
</dbReference>
<dbReference type="GO" id="GO:0042803">
    <property type="term" value="F:protein homodimerization activity"/>
    <property type="evidence" value="ECO:0000250"/>
    <property type="project" value="UniProtKB"/>
</dbReference>
<dbReference type="GO" id="GO:0017056">
    <property type="term" value="F:structural constituent of nuclear pore"/>
    <property type="evidence" value="ECO:0000250"/>
    <property type="project" value="UniProtKB"/>
</dbReference>
<dbReference type="GO" id="GO:0051301">
    <property type="term" value="P:cell division"/>
    <property type="evidence" value="ECO:0007669"/>
    <property type="project" value="UniProtKB-KW"/>
</dbReference>
<dbReference type="GO" id="GO:0034605">
    <property type="term" value="P:cellular response to heat"/>
    <property type="evidence" value="ECO:0000250"/>
    <property type="project" value="UniProtKB"/>
</dbReference>
<dbReference type="GO" id="GO:0035457">
    <property type="term" value="P:cellular response to interferon-alpha"/>
    <property type="evidence" value="ECO:0000314"/>
    <property type="project" value="UniProtKB"/>
</dbReference>
<dbReference type="GO" id="GO:0007094">
    <property type="term" value="P:mitotic spindle assembly checkpoint signaling"/>
    <property type="evidence" value="ECO:0000250"/>
    <property type="project" value="UniProtKB"/>
</dbReference>
<dbReference type="GO" id="GO:0031990">
    <property type="term" value="P:mRNA export from nucleus in response to heat stress"/>
    <property type="evidence" value="ECO:0000250"/>
    <property type="project" value="UniProtKB"/>
</dbReference>
<dbReference type="GO" id="GO:0046832">
    <property type="term" value="P:negative regulation of RNA export from nucleus"/>
    <property type="evidence" value="ECO:0000250"/>
    <property type="project" value="UniProtKB"/>
</dbReference>
<dbReference type="GO" id="GO:0000122">
    <property type="term" value="P:negative regulation of transcription by RNA polymerase II"/>
    <property type="evidence" value="ECO:0000250"/>
    <property type="project" value="UniProtKB"/>
</dbReference>
<dbReference type="GO" id="GO:0045947">
    <property type="term" value="P:negative regulation of translational initiation"/>
    <property type="evidence" value="ECO:0000250"/>
    <property type="project" value="UniProtKB"/>
</dbReference>
<dbReference type="GO" id="GO:0006913">
    <property type="term" value="P:nucleocytoplasmic transport"/>
    <property type="evidence" value="ECO:0000303"/>
    <property type="project" value="ComplexPortal"/>
</dbReference>
<dbReference type="GO" id="GO:0031453">
    <property type="term" value="P:positive regulation of heterochromatin formation"/>
    <property type="evidence" value="ECO:0000250"/>
    <property type="project" value="UniProtKB"/>
</dbReference>
<dbReference type="GO" id="GO:0090316">
    <property type="term" value="P:positive regulation of intracellular protein transport"/>
    <property type="evidence" value="ECO:0000250"/>
    <property type="project" value="UniProtKB"/>
</dbReference>
<dbReference type="GO" id="GO:0090267">
    <property type="term" value="P:positive regulation of mitotic cell cycle spindle assembly checkpoint"/>
    <property type="evidence" value="ECO:0000250"/>
    <property type="project" value="UniProtKB"/>
</dbReference>
<dbReference type="GO" id="GO:0046827">
    <property type="term" value="P:positive regulation of protein export from nucleus"/>
    <property type="evidence" value="ECO:0000250"/>
    <property type="project" value="UniProtKB"/>
</dbReference>
<dbReference type="GO" id="GO:0042307">
    <property type="term" value="P:positive regulation of protein import into nucleus"/>
    <property type="evidence" value="ECO:0000250"/>
    <property type="project" value="UniProtKB"/>
</dbReference>
<dbReference type="GO" id="GO:0015031">
    <property type="term" value="P:protein transport"/>
    <property type="evidence" value="ECO:0007669"/>
    <property type="project" value="UniProtKB-KW"/>
</dbReference>
<dbReference type="GO" id="GO:0010965">
    <property type="term" value="P:regulation of mitotic sister chromatid separation"/>
    <property type="evidence" value="ECO:0000250"/>
    <property type="project" value="UniProtKB"/>
</dbReference>
<dbReference type="GO" id="GO:1901673">
    <property type="term" value="P:regulation of mitotic spindle assembly"/>
    <property type="evidence" value="ECO:0000250"/>
    <property type="project" value="UniProtKB"/>
</dbReference>
<dbReference type="GO" id="GO:0070849">
    <property type="term" value="P:response to epidermal growth factor"/>
    <property type="evidence" value="ECO:0000250"/>
    <property type="project" value="UniProtKB"/>
</dbReference>
<dbReference type="GO" id="GO:0006405">
    <property type="term" value="P:RNA export from nucleus"/>
    <property type="evidence" value="ECO:0000250"/>
    <property type="project" value="UniProtKB"/>
</dbReference>
<dbReference type="GO" id="GO:0006404">
    <property type="term" value="P:RNA import into nucleus"/>
    <property type="evidence" value="ECO:0000250"/>
    <property type="project" value="UniProtKB"/>
</dbReference>
<dbReference type="FunFam" id="1.10.287.1490:FF:000004">
    <property type="entry name" value="nucleoprotein TPR isoform X2"/>
    <property type="match status" value="1"/>
</dbReference>
<dbReference type="Gene3D" id="1.10.287.1490">
    <property type="match status" value="2"/>
</dbReference>
<dbReference type="InterPro" id="IPR012929">
    <property type="entry name" value="TPR/MLP1"/>
</dbReference>
<dbReference type="PANTHER" id="PTHR18898:SF2">
    <property type="entry name" value="NUCLEOPROTEIN TPR"/>
    <property type="match status" value="1"/>
</dbReference>
<dbReference type="PANTHER" id="PTHR18898">
    <property type="entry name" value="NUCLEOPROTEIN TPR-RELATED"/>
    <property type="match status" value="1"/>
</dbReference>
<dbReference type="Pfam" id="PF25481">
    <property type="entry name" value="Nucleoprot-TPR"/>
    <property type="match status" value="1"/>
</dbReference>
<dbReference type="Pfam" id="PF07926">
    <property type="entry name" value="TPR_MLP1_2"/>
    <property type="match status" value="1"/>
</dbReference>
<protein>
    <recommendedName>
        <fullName evidence="7">Nucleoprotein TPR</fullName>
    </recommendedName>
    <alternativeName>
        <fullName>NPC-associated intranuclear protein</fullName>
    </alternativeName>
    <alternativeName>
        <fullName>Translocated promoter region and nuclear basket protein</fullName>
    </alternativeName>
</protein>
<name>TPR_MOUSE</name>
<proteinExistence type="evidence at protein level"/>
<accession>F6ZDS4</accession>
<accession>Q8R4A0</accession>
<accession>Q921B9</accession>